<proteinExistence type="evidence at transcript level"/>
<keyword id="KW-0165">Cleavage on pair of basic residues</keyword>
<keyword id="KW-0372">Hormone</keyword>
<keyword id="KW-1185">Reference proteome</keyword>
<keyword id="KW-0964">Secreted</keyword>
<keyword id="KW-0732">Signal</keyword>
<feature type="signal peptide">
    <location>
        <begin position="1"/>
        <end position="25"/>
    </location>
</feature>
<feature type="propeptide" id="PRO_0000023255">
    <location>
        <begin position="26"/>
        <end position="31"/>
    </location>
</feature>
<feature type="chain" id="PRO_0000023256" description="Parathyroid hormone">
    <location>
        <begin position="32"/>
        <end position="115"/>
    </location>
</feature>
<feature type="region of interest" description="Important for receptor binding" evidence="1">
    <location>
        <begin position="51"/>
        <end position="69"/>
    </location>
</feature>
<feature type="region of interest" description="Disordered" evidence="2">
    <location>
        <begin position="76"/>
        <end position="101"/>
    </location>
</feature>
<feature type="sequence conflict" description="In Ref. 3; AAA57156." evidence="5" ref="3">
    <original>C</original>
    <variation>Y</variation>
    <location>
        <position position="18"/>
    </location>
</feature>
<feature type="sequence conflict" description="In Ref. 3; AAA57156." evidence="5" ref="3">
    <original>A</original>
    <variation>T</variation>
    <location>
        <position position="23"/>
    </location>
</feature>
<feature type="sequence conflict" description="In Ref. 3; AAA57156." evidence="5" ref="3">
    <original>V</original>
    <variation>I</variation>
    <location>
        <position position="33"/>
    </location>
</feature>
<feature type="sequence conflict" description="In Ref. 3; AAA57156." evidence="5" ref="3">
    <original>V</original>
    <variation>G</variation>
    <location>
        <position position="62"/>
    </location>
</feature>
<name>PTHY_RAT</name>
<accession>P04089</accession>
<accession>Q63473</accession>
<dbReference type="EMBL" id="K01268">
    <property type="protein sequence ID" value="AAA41979.1"/>
    <property type="molecule type" value="Genomic_DNA"/>
</dbReference>
<dbReference type="EMBL" id="X05721">
    <property type="protein sequence ID" value="CAA29192.1"/>
    <property type="molecule type" value="mRNA"/>
</dbReference>
<dbReference type="EMBL" id="M54875">
    <property type="protein sequence ID" value="AAA57156.1"/>
    <property type="molecule type" value="mRNA"/>
</dbReference>
<dbReference type="EMBL" id="S80127">
    <property type="status" value="NOT_ANNOTATED_CDS"/>
    <property type="molecule type" value="mRNA"/>
</dbReference>
<dbReference type="PIR" id="A05091">
    <property type="entry name" value="A05091"/>
</dbReference>
<dbReference type="RefSeq" id="NP_058740.1">
    <property type="nucleotide sequence ID" value="NM_017044.1"/>
</dbReference>
<dbReference type="RefSeq" id="XP_038956717.1">
    <property type="nucleotide sequence ID" value="XM_039100789.2"/>
</dbReference>
<dbReference type="SMR" id="P04089"/>
<dbReference type="CORUM" id="P04089"/>
<dbReference type="FunCoup" id="P04089">
    <property type="interactions" value="52"/>
</dbReference>
<dbReference type="STRING" id="10116.ENSRNOP00000019199"/>
<dbReference type="PhosphoSitePlus" id="P04089"/>
<dbReference type="PaxDb" id="10116-ENSRNOP00000019199"/>
<dbReference type="Ensembl" id="ENSRNOT00000019199.3">
    <property type="protein sequence ID" value="ENSRNOP00000019199.1"/>
    <property type="gene ID" value="ENSRNOG00000014318.3"/>
</dbReference>
<dbReference type="GeneID" id="24694"/>
<dbReference type="KEGG" id="rno:24694"/>
<dbReference type="UCSC" id="RGD:3440">
    <property type="organism name" value="rat"/>
</dbReference>
<dbReference type="AGR" id="RGD:3440"/>
<dbReference type="CTD" id="5741"/>
<dbReference type="RGD" id="3440">
    <property type="gene designation" value="Pth"/>
</dbReference>
<dbReference type="eggNOG" id="ENOG502SB2W">
    <property type="taxonomic scope" value="Eukaryota"/>
</dbReference>
<dbReference type="GeneTree" id="ENSGT00390000018603"/>
<dbReference type="HOGENOM" id="CLU_164143_0_0_1"/>
<dbReference type="InParanoid" id="P04089"/>
<dbReference type="OMA" id="MKLQDVH"/>
<dbReference type="OrthoDB" id="9890537at2759"/>
<dbReference type="PhylomeDB" id="P04089"/>
<dbReference type="TreeFam" id="TF336197"/>
<dbReference type="Reactome" id="R-RNO-373080">
    <property type="pathway name" value="Class B/2 (Secretin family receptors)"/>
</dbReference>
<dbReference type="PRO" id="PR:P04089"/>
<dbReference type="Proteomes" id="UP000002494">
    <property type="component" value="Chromosome 1"/>
</dbReference>
<dbReference type="Bgee" id="ENSRNOG00000014318">
    <property type="expression patterns" value="Expressed in stomach and 1 other cell type or tissue"/>
</dbReference>
<dbReference type="GO" id="GO:0005615">
    <property type="term" value="C:extracellular space"/>
    <property type="evidence" value="ECO:0000314"/>
    <property type="project" value="RGD"/>
</dbReference>
<dbReference type="GO" id="GO:0005179">
    <property type="term" value="F:hormone activity"/>
    <property type="evidence" value="ECO:0000315"/>
    <property type="project" value="CAFA"/>
</dbReference>
<dbReference type="GO" id="GO:0031856">
    <property type="term" value="F:parathyroid hormone receptor binding"/>
    <property type="evidence" value="ECO:0000314"/>
    <property type="project" value="RGD"/>
</dbReference>
<dbReference type="GO" id="GO:0051428">
    <property type="term" value="F:peptide hormone receptor binding"/>
    <property type="evidence" value="ECO:0000315"/>
    <property type="project" value="CAFA"/>
</dbReference>
<dbReference type="GO" id="GO:0048018">
    <property type="term" value="F:receptor ligand activity"/>
    <property type="evidence" value="ECO:0000315"/>
    <property type="project" value="CAFA"/>
</dbReference>
<dbReference type="GO" id="GO:0031857">
    <property type="term" value="F:type 1 parathyroid hormone receptor binding"/>
    <property type="evidence" value="ECO:0000314"/>
    <property type="project" value="RGD"/>
</dbReference>
<dbReference type="GO" id="GO:0007189">
    <property type="term" value="P:adenylate cyclase-activating G protein-coupled receptor signaling pathway"/>
    <property type="evidence" value="ECO:0000314"/>
    <property type="project" value="MGI"/>
</dbReference>
<dbReference type="GO" id="GO:0030282">
    <property type="term" value="P:bone mineralization"/>
    <property type="evidence" value="ECO:0000266"/>
    <property type="project" value="RGD"/>
</dbReference>
<dbReference type="GO" id="GO:0045453">
    <property type="term" value="P:bone resorption"/>
    <property type="evidence" value="ECO:0000304"/>
    <property type="project" value="RGD"/>
</dbReference>
<dbReference type="GO" id="GO:0055074">
    <property type="term" value="P:calcium ion homeostasis"/>
    <property type="evidence" value="ECO:0000266"/>
    <property type="project" value="RGD"/>
</dbReference>
<dbReference type="GO" id="GO:0007267">
    <property type="term" value="P:cell-cell signaling"/>
    <property type="evidence" value="ECO:0000314"/>
    <property type="project" value="RGD"/>
</dbReference>
<dbReference type="GO" id="GO:0048873">
    <property type="term" value="P:homeostasis of number of cells within a tissue"/>
    <property type="evidence" value="ECO:0000266"/>
    <property type="project" value="RGD"/>
</dbReference>
<dbReference type="GO" id="GO:0006874">
    <property type="term" value="P:intracellular calcium ion homeostasis"/>
    <property type="evidence" value="ECO:0000314"/>
    <property type="project" value="MGI"/>
</dbReference>
<dbReference type="GO" id="GO:0010960">
    <property type="term" value="P:magnesium ion homeostasis"/>
    <property type="evidence" value="ECO:0000266"/>
    <property type="project" value="RGD"/>
</dbReference>
<dbReference type="GO" id="GO:0071866">
    <property type="term" value="P:negative regulation of apoptotic process in bone marrow cell"/>
    <property type="evidence" value="ECO:0000266"/>
    <property type="project" value="RGD"/>
</dbReference>
<dbReference type="GO" id="GO:1900158">
    <property type="term" value="P:negative regulation of bone mineralization involved in bone maturation"/>
    <property type="evidence" value="ECO:0000315"/>
    <property type="project" value="CAFA"/>
</dbReference>
<dbReference type="GO" id="GO:0032331">
    <property type="term" value="P:negative regulation of chondrocyte differentiation"/>
    <property type="evidence" value="ECO:0000315"/>
    <property type="project" value="CAFA"/>
</dbReference>
<dbReference type="GO" id="GO:0010629">
    <property type="term" value="P:negative regulation of gene expression"/>
    <property type="evidence" value="ECO:0000266"/>
    <property type="project" value="RGD"/>
</dbReference>
<dbReference type="GO" id="GO:0001503">
    <property type="term" value="P:ossification"/>
    <property type="evidence" value="ECO:0000304"/>
    <property type="project" value="RGD"/>
</dbReference>
<dbReference type="GO" id="GO:0055062">
    <property type="term" value="P:phosphate ion homeostasis"/>
    <property type="evidence" value="ECO:0000266"/>
    <property type="project" value="RGD"/>
</dbReference>
<dbReference type="GO" id="GO:0030501">
    <property type="term" value="P:positive regulation of bone mineralization"/>
    <property type="evidence" value="ECO:0000314"/>
    <property type="project" value="RGD"/>
</dbReference>
<dbReference type="GO" id="GO:0071864">
    <property type="term" value="P:positive regulation of cell proliferation in bone marrow"/>
    <property type="evidence" value="ECO:0000266"/>
    <property type="project" value="RGD"/>
</dbReference>
<dbReference type="GO" id="GO:0046326">
    <property type="term" value="P:positive regulation of D-glucose import"/>
    <property type="evidence" value="ECO:0000250"/>
    <property type="project" value="UniProtKB"/>
</dbReference>
<dbReference type="GO" id="GO:0010628">
    <property type="term" value="P:positive regulation of gene expression"/>
    <property type="evidence" value="ECO:0000315"/>
    <property type="project" value="RGD"/>
</dbReference>
<dbReference type="GO" id="GO:0045725">
    <property type="term" value="P:positive regulation of glycogen biosynthetic process"/>
    <property type="evidence" value="ECO:0000250"/>
    <property type="project" value="UniProtKB"/>
</dbReference>
<dbReference type="GO" id="GO:0060732">
    <property type="term" value="P:positive regulation of inositol phosphate biosynthetic process"/>
    <property type="evidence" value="ECO:0000266"/>
    <property type="project" value="RGD"/>
</dbReference>
<dbReference type="GO" id="GO:0045778">
    <property type="term" value="P:positive regulation of ossification"/>
    <property type="evidence" value="ECO:0000314"/>
    <property type="project" value="RGD"/>
</dbReference>
<dbReference type="GO" id="GO:0090290">
    <property type="term" value="P:positive regulation of osteoclast proliferation"/>
    <property type="evidence" value="ECO:0000266"/>
    <property type="project" value="RGD"/>
</dbReference>
<dbReference type="GO" id="GO:0009967">
    <property type="term" value="P:positive regulation of signal transduction"/>
    <property type="evidence" value="ECO:0000266"/>
    <property type="project" value="RGD"/>
</dbReference>
<dbReference type="GO" id="GO:0045944">
    <property type="term" value="P:positive regulation of transcription by RNA polymerase II"/>
    <property type="evidence" value="ECO:0000266"/>
    <property type="project" value="RGD"/>
</dbReference>
<dbReference type="GO" id="GO:0010468">
    <property type="term" value="P:regulation of gene expression"/>
    <property type="evidence" value="ECO:0000266"/>
    <property type="project" value="RGD"/>
</dbReference>
<dbReference type="GO" id="GO:0046686">
    <property type="term" value="P:response to cadmium ion"/>
    <property type="evidence" value="ECO:0000270"/>
    <property type="project" value="RGD"/>
</dbReference>
<dbReference type="GO" id="GO:0045471">
    <property type="term" value="P:response to ethanol"/>
    <property type="evidence" value="ECO:0000270"/>
    <property type="project" value="RGD"/>
</dbReference>
<dbReference type="GO" id="GO:0071774">
    <property type="term" value="P:response to fibroblast growth factor"/>
    <property type="evidence" value="ECO:0000270"/>
    <property type="project" value="RGD"/>
</dbReference>
<dbReference type="GO" id="GO:0010288">
    <property type="term" value="P:response to lead ion"/>
    <property type="evidence" value="ECO:0000270"/>
    <property type="project" value="RGD"/>
</dbReference>
<dbReference type="GO" id="GO:0031667">
    <property type="term" value="P:response to nutrient levels"/>
    <property type="evidence" value="ECO:0000270"/>
    <property type="project" value="RGD"/>
</dbReference>
<dbReference type="GO" id="GO:0071107">
    <property type="term" value="P:response to parathyroid hormone"/>
    <property type="evidence" value="ECO:0000270"/>
    <property type="project" value="RGD"/>
</dbReference>
<dbReference type="GO" id="GO:0033280">
    <property type="term" value="P:response to vitamin D"/>
    <property type="evidence" value="ECO:0000270"/>
    <property type="project" value="RGD"/>
</dbReference>
<dbReference type="GO" id="GO:0009410">
    <property type="term" value="P:response to xenobiotic stimulus"/>
    <property type="evidence" value="ECO:0000270"/>
    <property type="project" value="RGD"/>
</dbReference>
<dbReference type="GO" id="GO:0007266">
    <property type="term" value="P:Rho protein signal transduction"/>
    <property type="evidence" value="ECO:0000315"/>
    <property type="project" value="RGD"/>
</dbReference>
<dbReference type="GO" id="GO:0007165">
    <property type="term" value="P:signal transduction"/>
    <property type="evidence" value="ECO:0000266"/>
    <property type="project" value="RGD"/>
</dbReference>
<dbReference type="GO" id="GO:0006366">
    <property type="term" value="P:transcription by RNA polymerase II"/>
    <property type="evidence" value="ECO:0000266"/>
    <property type="project" value="RGD"/>
</dbReference>
<dbReference type="InterPro" id="IPR003625">
    <property type="entry name" value="PTH"/>
</dbReference>
<dbReference type="InterPro" id="IPR001415">
    <property type="entry name" value="PTH/PTH-rel"/>
</dbReference>
<dbReference type="PANTHER" id="PTHR10541">
    <property type="entry name" value="PARATHYROID HORMONE"/>
    <property type="match status" value="1"/>
</dbReference>
<dbReference type="PANTHER" id="PTHR10541:SF2">
    <property type="entry name" value="PARATHYROID HORMONE"/>
    <property type="match status" value="1"/>
</dbReference>
<dbReference type="Pfam" id="PF01279">
    <property type="entry name" value="Parathyroid"/>
    <property type="match status" value="1"/>
</dbReference>
<dbReference type="PIRSF" id="PIRSF001832">
    <property type="entry name" value="PTH"/>
    <property type="match status" value="1"/>
</dbReference>
<dbReference type="SMART" id="SM00087">
    <property type="entry name" value="PTH"/>
    <property type="match status" value="1"/>
</dbReference>
<dbReference type="PROSITE" id="PS00335">
    <property type="entry name" value="PARATHYROID"/>
    <property type="match status" value="1"/>
</dbReference>
<sequence>MMSASTMAKVMILMLAVCLLTQADGKPVKKRAVSEIQLMHNLGKHLASVERMQWLRKKLQDVHNFVSLGVQMAAREGSYQRPTKKEENVLVDGNSKSLGEGDKADVDVLVKAKSQ</sequence>
<organism>
    <name type="scientific">Rattus norvegicus</name>
    <name type="common">Rat</name>
    <dbReference type="NCBI Taxonomy" id="10116"/>
    <lineage>
        <taxon>Eukaryota</taxon>
        <taxon>Metazoa</taxon>
        <taxon>Chordata</taxon>
        <taxon>Craniata</taxon>
        <taxon>Vertebrata</taxon>
        <taxon>Euteleostomi</taxon>
        <taxon>Mammalia</taxon>
        <taxon>Eutheria</taxon>
        <taxon>Euarchontoglires</taxon>
        <taxon>Glires</taxon>
        <taxon>Rodentia</taxon>
        <taxon>Myomorpha</taxon>
        <taxon>Muroidea</taxon>
        <taxon>Muridae</taxon>
        <taxon>Murinae</taxon>
        <taxon>Rattus</taxon>
    </lineage>
</organism>
<evidence type="ECO:0000250" key="1">
    <source>
        <dbReference type="UniProtKB" id="P01270"/>
    </source>
</evidence>
<evidence type="ECO:0000256" key="2">
    <source>
        <dbReference type="SAM" id="MobiDB-lite"/>
    </source>
</evidence>
<evidence type="ECO:0000269" key="3">
    <source>
    </source>
</evidence>
<evidence type="ECO:0000303" key="4">
    <source>
    </source>
</evidence>
<evidence type="ECO:0000305" key="5"/>
<gene>
    <name type="primary">Pth</name>
</gene>
<comment type="function">
    <text evidence="1">Parathyroid hormone elevates calcium level by dissolving the salts in bone and preventing their renal excretion. Acts by binding to its receptor, PTH1R, activating G protein-coupled receptor signaling. Stimulates [1-14C]-2-deoxy-D-glucose (2DG) transport and glycogen synthesis in osteoblastic cells.</text>
</comment>
<comment type="subunit">
    <text evidence="1">Interacts with PTH1R (via N-terminal extracellular domain).</text>
</comment>
<comment type="subcellular location">
    <subcellularLocation>
        <location evidence="1">Secreted</location>
    </subcellularLocation>
</comment>
<comment type="tissue specificity">
    <text evidence="3">Hypothalamus and parathyroid gland.</text>
</comment>
<comment type="similarity">
    <text evidence="5">Belongs to the parathyroid hormone family.</text>
</comment>
<reference key="1">
    <citation type="journal article" date="1984" name="J. Biol. Chem.">
        <title>Gene encoding parathyroid hormone. Nucleotide sequence of the rat gene and deduced amino acid sequence of rat preproparathyroid hormone.</title>
        <authorList>
            <person name="Heinrich G."/>
            <person name="Kronenberg H.M."/>
            <person name="Potts J.T. Jr."/>
            <person name="Habener J.F."/>
        </authorList>
    </citation>
    <scope>NUCLEOTIDE SEQUENCE [GENOMIC DNA]</scope>
</reference>
<reference key="2">
    <citation type="journal article" date="1987" name="Nucleic Acids Res.">
        <title>Nucleotide sequence of a full-length cDNA clone encoding preproparathyroid hormone from pig and rat.</title>
        <authorList>
            <person name="Schmelzer H.-J."/>
            <person name="Gross G."/>
            <person name="Widera G."/>
            <person name="Mayer H."/>
        </authorList>
    </citation>
    <scope>NUCLEOTIDE SEQUENCE [MRNA]</scope>
</reference>
<reference key="3">
    <citation type="journal article" date="1984" name="Adv. Gene Technol.">
        <title>Nucleotide sequence of cloned cDNA encoding rat prepro parathyroid hormone.</title>
        <authorList>
            <person name="Schmelzer H.J."/>
            <person name="Gross G."/>
            <person name="Mayer H."/>
        </authorList>
    </citation>
    <scope>NUCLEOTIDE SEQUENCE [MRNA] OF 10-115</scope>
    <source>
        <tissue>Parathyroid</tissue>
    </source>
</reference>
<reference key="4">
    <citation type="journal article" date="1995" name="Endocrinology">
        <title>Sequence analysis of hypothalamic parathyroid hormone messenger ribonucleic acid.</title>
        <authorList>
            <person name="Nutley M.T."/>
            <person name="Parimi S.A."/>
            <person name="Harvey S."/>
        </authorList>
    </citation>
    <scope>NUCLEOTIDE SEQUENCE [MRNA] OF 32-115</scope>
    <scope>TISSUE SPECIFICITY</scope>
    <source>
        <strain>Sprague-Dawley</strain>
        <tissue>Brain</tissue>
        <tissue>Liver</tissue>
        <tissue>Parathyroid</tissue>
    </source>
</reference>
<protein>
    <recommendedName>
        <fullName evidence="4">Parathyroid hormone</fullName>
        <shortName>PTH</shortName>
    </recommendedName>
    <alternativeName>
        <fullName>Parathyrin</fullName>
    </alternativeName>
</protein>